<feature type="chain" id="PRO_0000388668" description="N-acetyltaurine hydrolase">
    <location>
        <begin position="1"/>
        <end position="349"/>
    </location>
</feature>
<feature type="binding site" evidence="1">
    <location>
        <position position="26"/>
    </location>
    <ligand>
        <name>a divalent metal cation</name>
        <dbReference type="ChEBI" id="CHEBI:60240"/>
        <label>1</label>
    </ligand>
</feature>
<feature type="binding site" evidence="1">
    <location>
        <position position="28"/>
    </location>
    <ligand>
        <name>a divalent metal cation</name>
        <dbReference type="ChEBI" id="CHEBI:60240"/>
        <label>1</label>
    </ligand>
</feature>
<feature type="binding site" evidence="1">
    <location>
        <position position="169"/>
    </location>
    <ligand>
        <name>a divalent metal cation</name>
        <dbReference type="ChEBI" id="CHEBI:60240"/>
        <label>1</label>
    </ligand>
</feature>
<feature type="binding site" evidence="1">
    <location>
        <position position="169"/>
    </location>
    <ligand>
        <name>a divalent metal cation</name>
        <dbReference type="ChEBI" id="CHEBI:60240"/>
        <label>2</label>
    </ligand>
</feature>
<feature type="binding site" evidence="1">
    <location>
        <position position="201"/>
    </location>
    <ligand>
        <name>a divalent metal cation</name>
        <dbReference type="ChEBI" id="CHEBI:60240"/>
        <label>2</label>
    </ligand>
</feature>
<feature type="binding site" evidence="1">
    <location>
        <position position="230"/>
    </location>
    <ligand>
        <name>a divalent metal cation</name>
        <dbReference type="ChEBI" id="CHEBI:60240"/>
        <label>2</label>
    </ligand>
</feature>
<feature type="binding site" evidence="1">
    <location>
        <position position="298"/>
    </location>
    <ligand>
        <name>a divalent metal cation</name>
        <dbReference type="ChEBI" id="CHEBI:60240"/>
        <label>1</label>
    </ligand>
</feature>
<evidence type="ECO:0000250" key="1">
    <source>
        <dbReference type="UniProtKB" id="P45548"/>
    </source>
</evidence>
<evidence type="ECO:0000250" key="2">
    <source>
        <dbReference type="UniProtKB" id="Q60866"/>
    </source>
</evidence>
<evidence type="ECO:0000250" key="3">
    <source>
        <dbReference type="UniProtKB" id="Q96BW5"/>
    </source>
</evidence>
<evidence type="ECO:0000255" key="4">
    <source>
        <dbReference type="PROSITE-ProRule" id="PRU00679"/>
    </source>
</evidence>
<evidence type="ECO:0000305" key="5"/>
<sequence>MSALSGKVQTVLGPIEPDQLGRTMTHEHLTMTFECCYFSPAPGDETVAQAPIQMKNLFWLKQNPYSSHENLLLLQETNAVREELHEYRKAGGGTIVENTTQGIARDLPCLKQLAKESGVHIIGGAGYYVDATHSEATRKMTVEKLTDIIISEVLHGADGTEIRCGVIGEIGCSWPITDSEKKVLQATAHAQTELGCPVIIHPGRNPGAPAEIVRLLQEAGGDISKTVMSHLDRTIFDNGELLEFAKMGSYLEYDLFGMETLNYAYNLEVDMPSDSQRVKALAFLVQEGYEDNIVIAHDIHTKNRLTKYGGHGYSHILKNIVPKMLKRGINQTQVDKILIDNPKRWLTFK</sequence>
<name>PTER_SALSA</name>
<organism>
    <name type="scientific">Salmo salar</name>
    <name type="common">Atlantic salmon</name>
    <dbReference type="NCBI Taxonomy" id="8030"/>
    <lineage>
        <taxon>Eukaryota</taxon>
        <taxon>Metazoa</taxon>
        <taxon>Chordata</taxon>
        <taxon>Craniata</taxon>
        <taxon>Vertebrata</taxon>
        <taxon>Euteleostomi</taxon>
        <taxon>Actinopterygii</taxon>
        <taxon>Neopterygii</taxon>
        <taxon>Teleostei</taxon>
        <taxon>Protacanthopterygii</taxon>
        <taxon>Salmoniformes</taxon>
        <taxon>Salmonidae</taxon>
        <taxon>Salmoninae</taxon>
        <taxon>Salmo</taxon>
    </lineage>
</organism>
<keyword id="KW-0963">Cytoplasm</keyword>
<keyword id="KW-0378">Hydrolase</keyword>
<keyword id="KW-0479">Metal-binding</keyword>
<keyword id="KW-1185">Reference proteome</keyword>
<accession>B5X4Y9</accession>
<reference key="1">
    <citation type="journal article" date="2010" name="BMC Genomics">
        <title>Salmo salar and Esox lucius full-length cDNA sequences reveal changes in evolutionary pressures on a post-tetraploidization genome.</title>
        <authorList>
            <person name="Leong J.S."/>
            <person name="Jantzen S.G."/>
            <person name="von Schalburg K.R."/>
            <person name="Cooper G.A."/>
            <person name="Messmer A.M."/>
            <person name="Liao N.Y."/>
            <person name="Munro S."/>
            <person name="Moore R."/>
            <person name="Holt R.A."/>
            <person name="Jones S.J."/>
            <person name="Davidson W.S."/>
            <person name="Koop B.F."/>
        </authorList>
    </citation>
    <scope>NUCLEOTIDE SEQUENCE [LARGE SCALE MRNA]</scope>
    <source>
        <tissue>Brain</tissue>
    </source>
</reference>
<gene>
    <name type="primary">pter</name>
</gene>
<comment type="function">
    <text evidence="2">N-acetyltaurine hydrolase that catalyzes the hydrolysis of N-acetyltaurine into taurine and acetate. PTER also acts on other N-acetyl amino acids (Met, Ile, Leu, Val) and N-propionyltaurine, but at lower rates.</text>
</comment>
<comment type="catalytic activity">
    <reaction evidence="3">
        <text>N-acetyltaurine + H2O = taurine + acetate</text>
        <dbReference type="Rhea" id="RHEA:81107"/>
        <dbReference type="ChEBI" id="CHEBI:15377"/>
        <dbReference type="ChEBI" id="CHEBI:30089"/>
        <dbReference type="ChEBI" id="CHEBI:133737"/>
        <dbReference type="ChEBI" id="CHEBI:507393"/>
    </reaction>
    <physiologicalReaction direction="left-to-right" evidence="3">
        <dbReference type="Rhea" id="RHEA:81108"/>
    </physiologicalReaction>
</comment>
<comment type="catalytic activity">
    <reaction evidence="2">
        <text>N-propanoyltaurine + H2O = propanoate + taurine</text>
        <dbReference type="Rhea" id="RHEA:81111"/>
        <dbReference type="ChEBI" id="CHEBI:15377"/>
        <dbReference type="ChEBI" id="CHEBI:17272"/>
        <dbReference type="ChEBI" id="CHEBI:231795"/>
        <dbReference type="ChEBI" id="CHEBI:507393"/>
    </reaction>
    <physiologicalReaction direction="left-to-right" evidence="2">
        <dbReference type="Rhea" id="RHEA:81112"/>
    </physiologicalReaction>
</comment>
<comment type="catalytic activity">
    <reaction evidence="2">
        <text>N-acetyl-L-methionine + H2O = L-methionine + acetate</text>
        <dbReference type="Rhea" id="RHEA:67440"/>
        <dbReference type="ChEBI" id="CHEBI:15377"/>
        <dbReference type="ChEBI" id="CHEBI:30089"/>
        <dbReference type="ChEBI" id="CHEBI:57844"/>
        <dbReference type="ChEBI" id="CHEBI:71670"/>
    </reaction>
    <physiologicalReaction direction="left-to-right" evidence="2">
        <dbReference type="Rhea" id="RHEA:67441"/>
    </physiologicalReaction>
</comment>
<comment type="catalytic activity">
    <reaction evidence="2">
        <text>N-acetyl-L-isoleucine + H2O = L-isoleucine + acetate</text>
        <dbReference type="Rhea" id="RHEA:81119"/>
        <dbReference type="ChEBI" id="CHEBI:15377"/>
        <dbReference type="ChEBI" id="CHEBI:30089"/>
        <dbReference type="ChEBI" id="CHEBI:58045"/>
        <dbReference type="ChEBI" id="CHEBI:133735"/>
    </reaction>
    <physiologicalReaction direction="left-to-right" evidence="2">
        <dbReference type="Rhea" id="RHEA:81120"/>
    </physiologicalReaction>
</comment>
<comment type="catalytic activity">
    <reaction evidence="2">
        <text>N-acetyl-L-leucine + H2O = L-leucine + acetate</text>
        <dbReference type="Rhea" id="RHEA:81115"/>
        <dbReference type="ChEBI" id="CHEBI:15377"/>
        <dbReference type="ChEBI" id="CHEBI:30089"/>
        <dbReference type="ChEBI" id="CHEBI:57427"/>
        <dbReference type="ChEBI" id="CHEBI:58270"/>
    </reaction>
    <physiologicalReaction direction="left-to-right" evidence="2">
        <dbReference type="Rhea" id="RHEA:81116"/>
    </physiologicalReaction>
</comment>
<comment type="catalytic activity">
    <reaction evidence="2">
        <text>N-acetyl-L-valine + H2O = L-valine + acetate</text>
        <dbReference type="Rhea" id="RHEA:81123"/>
        <dbReference type="ChEBI" id="CHEBI:15377"/>
        <dbReference type="ChEBI" id="CHEBI:30089"/>
        <dbReference type="ChEBI" id="CHEBI:57762"/>
        <dbReference type="ChEBI" id="CHEBI:133716"/>
    </reaction>
    <physiologicalReaction direction="left-to-right" evidence="2">
        <dbReference type="Rhea" id="RHEA:81124"/>
    </physiologicalReaction>
</comment>
<comment type="cofactor">
    <cofactor evidence="1">
        <name>a divalent metal cation</name>
        <dbReference type="ChEBI" id="CHEBI:60240"/>
    </cofactor>
    <text evidence="1">Binds 2 divalent metal cations per subunit.</text>
</comment>
<comment type="subcellular location">
    <subcellularLocation>
        <location evidence="2">Cytoplasm</location>
        <location evidence="2">Cytosol</location>
    </subcellularLocation>
</comment>
<comment type="similarity">
    <text evidence="4">Belongs to the metallo-dependent hydrolases superfamily. Phosphotriesterase family.</text>
</comment>
<proteinExistence type="evidence at transcript level"/>
<protein>
    <recommendedName>
        <fullName evidence="5">N-acetyltaurine hydrolase</fullName>
        <ecNumber evidence="2">3.1.-.-</ecNumber>
    </recommendedName>
    <alternativeName>
        <fullName evidence="2">Phosphotriesterase-related protein</fullName>
    </alternativeName>
</protein>
<dbReference type="EC" id="3.1.-.-" evidence="2"/>
<dbReference type="EMBL" id="BT046108">
    <property type="protein sequence ID" value="ACI34370.1"/>
    <property type="molecule type" value="mRNA"/>
</dbReference>
<dbReference type="RefSeq" id="NP_001135294.1">
    <property type="nucleotide sequence ID" value="NM_001141822.1"/>
</dbReference>
<dbReference type="SMR" id="B5X4Y9"/>
<dbReference type="STRING" id="8030.ENSSSAP00000033724"/>
<dbReference type="PaxDb" id="8030-ENSSSAP00000033724"/>
<dbReference type="GeneID" id="100196800"/>
<dbReference type="KEGG" id="sasa:100196800"/>
<dbReference type="CTD" id="9317"/>
<dbReference type="OMA" id="MVKCGFI"/>
<dbReference type="OrthoDB" id="393821at7898"/>
<dbReference type="Proteomes" id="UP000087266">
    <property type="component" value="Chromosome ssa03"/>
</dbReference>
<dbReference type="Bgee" id="ENSSSAG00000041406">
    <property type="expression patterns" value="Expressed in mesonephros and 24 other cell types or tissues"/>
</dbReference>
<dbReference type="GO" id="GO:0005829">
    <property type="term" value="C:cytosol"/>
    <property type="evidence" value="ECO:0000250"/>
    <property type="project" value="UniProtKB"/>
</dbReference>
<dbReference type="GO" id="GO:0141215">
    <property type="term" value="F:N-acetyltaurine hydrolase activity"/>
    <property type="evidence" value="ECO:0000250"/>
    <property type="project" value="UniProtKB"/>
</dbReference>
<dbReference type="GO" id="GO:0008270">
    <property type="term" value="F:zinc ion binding"/>
    <property type="evidence" value="ECO:0007669"/>
    <property type="project" value="InterPro"/>
</dbReference>
<dbReference type="GO" id="GO:0009056">
    <property type="term" value="P:catabolic process"/>
    <property type="evidence" value="ECO:0007669"/>
    <property type="project" value="InterPro"/>
</dbReference>
<dbReference type="GO" id="GO:0032098">
    <property type="term" value="P:regulation of appetite"/>
    <property type="evidence" value="ECO:0000250"/>
    <property type="project" value="UniProtKB"/>
</dbReference>
<dbReference type="GO" id="GO:0019530">
    <property type="term" value="P:taurine metabolic process"/>
    <property type="evidence" value="ECO:0000250"/>
    <property type="project" value="UniProtKB"/>
</dbReference>
<dbReference type="CDD" id="cd00530">
    <property type="entry name" value="PTE"/>
    <property type="match status" value="1"/>
</dbReference>
<dbReference type="Gene3D" id="3.20.20.140">
    <property type="entry name" value="Metal-dependent hydrolases"/>
    <property type="match status" value="1"/>
</dbReference>
<dbReference type="InterPro" id="IPR032466">
    <property type="entry name" value="Metal_Hydrolase"/>
</dbReference>
<dbReference type="InterPro" id="IPR001559">
    <property type="entry name" value="Phosphotriesterase"/>
</dbReference>
<dbReference type="PANTHER" id="PTHR10819">
    <property type="entry name" value="PHOSPHOTRIESTERASE-RELATED"/>
    <property type="match status" value="1"/>
</dbReference>
<dbReference type="PANTHER" id="PTHR10819:SF3">
    <property type="entry name" value="PHOSPHOTRIESTERASE-RELATED PROTEIN"/>
    <property type="match status" value="1"/>
</dbReference>
<dbReference type="Pfam" id="PF02126">
    <property type="entry name" value="PTE"/>
    <property type="match status" value="1"/>
</dbReference>
<dbReference type="PIRSF" id="PIRSF016839">
    <property type="entry name" value="PhP"/>
    <property type="match status" value="1"/>
</dbReference>
<dbReference type="SUPFAM" id="SSF51556">
    <property type="entry name" value="Metallo-dependent hydrolases"/>
    <property type="match status" value="1"/>
</dbReference>
<dbReference type="PROSITE" id="PS51347">
    <property type="entry name" value="PHOSPHOTRIESTERASE_2"/>
    <property type="match status" value="1"/>
</dbReference>